<protein>
    <recommendedName>
        <fullName evidence="1">Phosphoribosylaminoimidazole-succinocarboxamide synthase</fullName>
        <ecNumber evidence="1">6.3.2.6</ecNumber>
    </recommendedName>
    <alternativeName>
        <fullName evidence="1">SAICAR synthetase</fullName>
    </alternativeName>
</protein>
<sequence length="296" mass="32978">MSQPVKQTDFPGLKLVNRGKVRDIYDLGDALLMVTSDRISAFDVIMNEPIPDKGKVLTQISKFWFSQMEDIIPNHIISTDVADYPAACQPYAEVLAGRSMLVKKAEPLAAECIVRGYVSGSGWKDYKATGSICGIKLPEGLKESDRLAEPIFTPSTKAELGTHDENISFDEMVKVCGKELAEQAREATIRIYCRAREIADQKGIIIADTKFEFGVYEGKLIIIDECLTPDSSRFWPKDQYQPGGPQPSFDKQFLRDYLETLDWGKTAPAPPLPEEIVTKTGEKYKEALFKLAGITV</sequence>
<name>PUR7_TRIL1</name>
<comment type="catalytic activity">
    <reaction evidence="1">
        <text>5-amino-1-(5-phospho-D-ribosyl)imidazole-4-carboxylate + L-aspartate + ATP = (2S)-2-[5-amino-1-(5-phospho-beta-D-ribosyl)imidazole-4-carboxamido]succinate + ADP + phosphate + 2 H(+)</text>
        <dbReference type="Rhea" id="RHEA:22628"/>
        <dbReference type="ChEBI" id="CHEBI:15378"/>
        <dbReference type="ChEBI" id="CHEBI:29991"/>
        <dbReference type="ChEBI" id="CHEBI:30616"/>
        <dbReference type="ChEBI" id="CHEBI:43474"/>
        <dbReference type="ChEBI" id="CHEBI:58443"/>
        <dbReference type="ChEBI" id="CHEBI:77657"/>
        <dbReference type="ChEBI" id="CHEBI:456216"/>
        <dbReference type="EC" id="6.3.2.6"/>
    </reaction>
</comment>
<comment type="pathway">
    <text evidence="1">Purine metabolism; IMP biosynthesis via de novo pathway; 5-amino-1-(5-phospho-D-ribosyl)imidazole-4-carboxamide from 5-amino-1-(5-phospho-D-ribosyl)imidazole-4-carboxylate: step 1/2.</text>
</comment>
<comment type="similarity">
    <text evidence="1">Belongs to the SAICAR synthetase family.</text>
</comment>
<organism>
    <name type="scientific">Trichlorobacter lovleyi (strain ATCC BAA-1151 / DSM 17278 / SZ)</name>
    <name type="common">Geobacter lovleyi</name>
    <dbReference type="NCBI Taxonomy" id="398767"/>
    <lineage>
        <taxon>Bacteria</taxon>
        <taxon>Pseudomonadati</taxon>
        <taxon>Thermodesulfobacteriota</taxon>
        <taxon>Desulfuromonadia</taxon>
        <taxon>Geobacterales</taxon>
        <taxon>Geobacteraceae</taxon>
        <taxon>Trichlorobacter</taxon>
    </lineage>
</organism>
<dbReference type="EC" id="6.3.2.6" evidence="1"/>
<dbReference type="EMBL" id="CP001089">
    <property type="protein sequence ID" value="ACD96753.1"/>
    <property type="molecule type" value="Genomic_DNA"/>
</dbReference>
<dbReference type="RefSeq" id="WP_012471078.1">
    <property type="nucleotide sequence ID" value="NC_010814.1"/>
</dbReference>
<dbReference type="SMR" id="B3E940"/>
<dbReference type="STRING" id="398767.Glov_3047"/>
<dbReference type="KEGG" id="glo:Glov_3047"/>
<dbReference type="eggNOG" id="COG0152">
    <property type="taxonomic scope" value="Bacteria"/>
</dbReference>
<dbReference type="HOGENOM" id="CLU_045637_0_0_7"/>
<dbReference type="OrthoDB" id="9801549at2"/>
<dbReference type="UniPathway" id="UPA00074">
    <property type="reaction ID" value="UER00131"/>
</dbReference>
<dbReference type="Proteomes" id="UP000002420">
    <property type="component" value="Chromosome"/>
</dbReference>
<dbReference type="GO" id="GO:0005737">
    <property type="term" value="C:cytoplasm"/>
    <property type="evidence" value="ECO:0007669"/>
    <property type="project" value="TreeGrafter"/>
</dbReference>
<dbReference type="GO" id="GO:0005524">
    <property type="term" value="F:ATP binding"/>
    <property type="evidence" value="ECO:0007669"/>
    <property type="project" value="UniProtKB-KW"/>
</dbReference>
<dbReference type="GO" id="GO:0004639">
    <property type="term" value="F:phosphoribosylaminoimidazolesuccinocarboxamide synthase activity"/>
    <property type="evidence" value="ECO:0007669"/>
    <property type="project" value="UniProtKB-UniRule"/>
</dbReference>
<dbReference type="GO" id="GO:0006189">
    <property type="term" value="P:'de novo' IMP biosynthetic process"/>
    <property type="evidence" value="ECO:0007669"/>
    <property type="project" value="UniProtKB-UniRule"/>
</dbReference>
<dbReference type="CDD" id="cd01414">
    <property type="entry name" value="SAICAR_synt_Sc"/>
    <property type="match status" value="1"/>
</dbReference>
<dbReference type="FunFam" id="3.30.470.20:FF:000015">
    <property type="entry name" value="Phosphoribosylaminoimidazole-succinocarboxamide synthase"/>
    <property type="match status" value="1"/>
</dbReference>
<dbReference type="Gene3D" id="3.30.470.20">
    <property type="entry name" value="ATP-grasp fold, B domain"/>
    <property type="match status" value="1"/>
</dbReference>
<dbReference type="Gene3D" id="3.30.200.20">
    <property type="entry name" value="Phosphorylase Kinase, domain 1"/>
    <property type="match status" value="1"/>
</dbReference>
<dbReference type="HAMAP" id="MF_00137">
    <property type="entry name" value="SAICAR_synth"/>
    <property type="match status" value="1"/>
</dbReference>
<dbReference type="InterPro" id="IPR028923">
    <property type="entry name" value="SAICAR_synt/ADE2_N"/>
</dbReference>
<dbReference type="InterPro" id="IPR001636">
    <property type="entry name" value="SAICAR_synth"/>
</dbReference>
<dbReference type="InterPro" id="IPR018236">
    <property type="entry name" value="SAICAR_synthetase_CS"/>
</dbReference>
<dbReference type="NCBIfam" id="NF010568">
    <property type="entry name" value="PRK13961.1"/>
    <property type="match status" value="1"/>
</dbReference>
<dbReference type="NCBIfam" id="TIGR00081">
    <property type="entry name" value="purC"/>
    <property type="match status" value="1"/>
</dbReference>
<dbReference type="PANTHER" id="PTHR43700">
    <property type="entry name" value="PHOSPHORIBOSYLAMINOIMIDAZOLE-SUCCINOCARBOXAMIDE SYNTHASE"/>
    <property type="match status" value="1"/>
</dbReference>
<dbReference type="PANTHER" id="PTHR43700:SF1">
    <property type="entry name" value="PHOSPHORIBOSYLAMINOIMIDAZOLE-SUCCINOCARBOXAMIDE SYNTHASE"/>
    <property type="match status" value="1"/>
</dbReference>
<dbReference type="Pfam" id="PF01259">
    <property type="entry name" value="SAICAR_synt"/>
    <property type="match status" value="1"/>
</dbReference>
<dbReference type="SUPFAM" id="SSF56104">
    <property type="entry name" value="SAICAR synthase-like"/>
    <property type="match status" value="1"/>
</dbReference>
<dbReference type="PROSITE" id="PS01058">
    <property type="entry name" value="SAICAR_SYNTHETASE_2"/>
    <property type="match status" value="1"/>
</dbReference>
<proteinExistence type="inferred from homology"/>
<feature type="chain" id="PRO_1000095987" description="Phosphoribosylaminoimidazole-succinocarboxamide synthase">
    <location>
        <begin position="1"/>
        <end position="296"/>
    </location>
</feature>
<gene>
    <name evidence="1" type="primary">purC</name>
    <name type="ordered locus">Glov_3047</name>
</gene>
<evidence type="ECO:0000255" key="1">
    <source>
        <dbReference type="HAMAP-Rule" id="MF_00137"/>
    </source>
</evidence>
<keyword id="KW-0067">ATP-binding</keyword>
<keyword id="KW-0436">Ligase</keyword>
<keyword id="KW-0547">Nucleotide-binding</keyword>
<keyword id="KW-0658">Purine biosynthesis</keyword>
<keyword id="KW-1185">Reference proteome</keyword>
<reference key="1">
    <citation type="submission" date="2008-05" db="EMBL/GenBank/DDBJ databases">
        <title>Complete sequence of chromosome of Geobacter lovleyi SZ.</title>
        <authorList>
            <consortium name="US DOE Joint Genome Institute"/>
            <person name="Lucas S."/>
            <person name="Copeland A."/>
            <person name="Lapidus A."/>
            <person name="Glavina del Rio T."/>
            <person name="Dalin E."/>
            <person name="Tice H."/>
            <person name="Bruce D."/>
            <person name="Goodwin L."/>
            <person name="Pitluck S."/>
            <person name="Chertkov O."/>
            <person name="Meincke L."/>
            <person name="Brettin T."/>
            <person name="Detter J.C."/>
            <person name="Han C."/>
            <person name="Tapia R."/>
            <person name="Kuske C.R."/>
            <person name="Schmutz J."/>
            <person name="Larimer F."/>
            <person name="Land M."/>
            <person name="Hauser L."/>
            <person name="Kyrpides N."/>
            <person name="Mikhailova N."/>
            <person name="Sung Y."/>
            <person name="Fletcher K.E."/>
            <person name="Ritalahti K.M."/>
            <person name="Loeffler F.E."/>
            <person name="Richardson P."/>
        </authorList>
    </citation>
    <scope>NUCLEOTIDE SEQUENCE [LARGE SCALE GENOMIC DNA]</scope>
    <source>
        <strain>ATCC BAA-1151 / DSM 17278 / SZ</strain>
    </source>
</reference>
<accession>B3E940</accession>